<protein>
    <recommendedName>
        <fullName>Proline iminopeptidase</fullName>
        <shortName>PIP</shortName>
        <ecNumber>3.4.11.5</ecNumber>
    </recommendedName>
    <alternativeName>
        <fullName>Prolyl aminopeptidase</fullName>
        <shortName>PAP</shortName>
    </alternativeName>
</protein>
<sequence length="317" mass="36084">MEQLRGLYPPLAAYDSGWLDTGDGHRIYWELSGNPNGKPAVFIHGGPGGGISPHHRQLFDPERYKVLLFDQRGCGRSRPHASLDNNTTWHLVADIERLREMAGVEQWLVFGGSWGSTLALAYAQTHPERVSEMVLRGIFTLRKQRLHWYYQDGASRFFPEKWERVLSILSDDERKDVIAAYRQRLTSADPQVQLEAAKLWSVWEGETVTLLPSRESASFGEDDFALAFARIENHYFTHLGFLESDDQLLRNVPLIRHIPAVIVHGRYDMACQVQNAWDLAKAWPEAELHIVEGAGHSYDEPGILHQLMIATDRFAGK</sequence>
<name>PIP_SERMA</name>
<comment type="function">
    <text>Specifically catalyzes the removal of N-terminal proline residues from peptides.</text>
</comment>
<comment type="catalytic activity">
    <reaction>
        <text>Release of N-terminal proline from a peptide.</text>
        <dbReference type="EC" id="3.4.11.5"/>
    </reaction>
</comment>
<comment type="subunit">
    <text>Monomer.</text>
</comment>
<comment type="subcellular location">
    <subcellularLocation>
        <location>Cytoplasm</location>
    </subcellularLocation>
</comment>
<comment type="similarity">
    <text evidence="2">Belongs to the peptidase S33 family.</text>
</comment>
<gene>
    <name type="primary">pip</name>
</gene>
<proteinExistence type="evidence at protein level"/>
<keyword id="KW-0002">3D-structure</keyword>
<keyword id="KW-0031">Aminopeptidase</keyword>
<keyword id="KW-0963">Cytoplasm</keyword>
<keyword id="KW-0378">Hydrolase</keyword>
<keyword id="KW-0645">Protease</keyword>
<accession>O32449</accession>
<dbReference type="EC" id="3.4.11.5"/>
<dbReference type="EMBL" id="D87897">
    <property type="protein sequence ID" value="BAA23336.1"/>
    <property type="molecule type" value="Genomic_DNA"/>
</dbReference>
<dbReference type="PIR" id="JC5696">
    <property type="entry name" value="JC5696"/>
</dbReference>
<dbReference type="PDB" id="1QTR">
    <property type="method" value="X-ray"/>
    <property type="resolution" value="2.32 A"/>
    <property type="chains" value="A=1-317"/>
</dbReference>
<dbReference type="PDB" id="1WM1">
    <property type="method" value="X-ray"/>
    <property type="resolution" value="2.10 A"/>
    <property type="chains" value="A=1-317"/>
</dbReference>
<dbReference type="PDB" id="1X2B">
    <property type="method" value="X-ray"/>
    <property type="resolution" value="2.40 A"/>
    <property type="chains" value="A=1-317"/>
</dbReference>
<dbReference type="PDB" id="1X2E">
    <property type="method" value="X-ray"/>
    <property type="resolution" value="2.40 A"/>
    <property type="chains" value="A=1-317"/>
</dbReference>
<dbReference type="PDBsum" id="1QTR"/>
<dbReference type="PDBsum" id="1WM1"/>
<dbReference type="PDBsum" id="1X2B"/>
<dbReference type="PDBsum" id="1X2E"/>
<dbReference type="SMR" id="O32449"/>
<dbReference type="STRING" id="273526.SMDB11_1211"/>
<dbReference type="BindingDB" id="O32449"/>
<dbReference type="ChEMBL" id="CHEMBL1075256"/>
<dbReference type="DrugBank" id="DB07391">
    <property type="generic name" value="(2S)-2-AMINO-1-(5-TERT-BUTYL-1,3,4-OXADIAZOL-2-YL)PROPAN-1-ONE"/>
</dbReference>
<dbReference type="DrugBank" id="DB08576">
    <property type="generic name" value="1-(5-TERT-BUTYL-1,3,4-OXADIAZOL-2-YL)-2-(METHYLAMINO)ETHANONE"/>
</dbReference>
<dbReference type="DrugBank" id="DB03833">
    <property type="generic name" value="2-Prolyl-5-Tert-Butyl-[1,3,4]Oxadiazole"/>
</dbReference>
<dbReference type="ESTHER" id="serma-impep">
    <property type="family name" value="Proline_iminopeptidase"/>
</dbReference>
<dbReference type="MEROPS" id="S33.001"/>
<dbReference type="BRENDA" id="3.4.11.5">
    <property type="organism ID" value="5690"/>
</dbReference>
<dbReference type="EvolutionaryTrace" id="O32449"/>
<dbReference type="GO" id="GO:0005737">
    <property type="term" value="C:cytoplasm"/>
    <property type="evidence" value="ECO:0007669"/>
    <property type="project" value="UniProtKB-SubCell"/>
</dbReference>
<dbReference type="GO" id="GO:0004177">
    <property type="term" value="F:aminopeptidase activity"/>
    <property type="evidence" value="ECO:0007669"/>
    <property type="project" value="UniProtKB-KW"/>
</dbReference>
<dbReference type="GO" id="GO:0006508">
    <property type="term" value="P:proteolysis"/>
    <property type="evidence" value="ECO:0007669"/>
    <property type="project" value="UniProtKB-KW"/>
</dbReference>
<dbReference type="Gene3D" id="3.40.50.1820">
    <property type="entry name" value="alpha/beta hydrolase"/>
    <property type="match status" value="1"/>
</dbReference>
<dbReference type="InterPro" id="IPR000073">
    <property type="entry name" value="AB_hydrolase_1"/>
</dbReference>
<dbReference type="InterPro" id="IPR029058">
    <property type="entry name" value="AB_hydrolase_fold"/>
</dbReference>
<dbReference type="InterPro" id="IPR002410">
    <property type="entry name" value="Peptidase_S33"/>
</dbReference>
<dbReference type="InterPro" id="IPR005944">
    <property type="entry name" value="Pro_iminopeptidase"/>
</dbReference>
<dbReference type="NCBIfam" id="TIGR01249">
    <property type="entry name" value="pro_imino_pep_1"/>
    <property type="match status" value="1"/>
</dbReference>
<dbReference type="PANTHER" id="PTHR43722">
    <property type="entry name" value="PROLINE IMINOPEPTIDASE"/>
    <property type="match status" value="1"/>
</dbReference>
<dbReference type="PANTHER" id="PTHR43722:SF1">
    <property type="entry name" value="PROLINE IMINOPEPTIDASE"/>
    <property type="match status" value="1"/>
</dbReference>
<dbReference type="Pfam" id="PF00561">
    <property type="entry name" value="Abhydrolase_1"/>
    <property type="match status" value="1"/>
</dbReference>
<dbReference type="PIRSF" id="PIRSF006431">
    <property type="entry name" value="Pept_S33"/>
    <property type="match status" value="1"/>
</dbReference>
<dbReference type="PRINTS" id="PR00111">
    <property type="entry name" value="ABHYDROLASE"/>
</dbReference>
<dbReference type="PRINTS" id="PR00793">
    <property type="entry name" value="PROAMNOPTASE"/>
</dbReference>
<dbReference type="SUPFAM" id="SSF53474">
    <property type="entry name" value="alpha/beta-Hydrolases"/>
    <property type="match status" value="1"/>
</dbReference>
<evidence type="ECO:0000255" key="1"/>
<evidence type="ECO:0000305" key="2"/>
<evidence type="ECO:0007829" key="3">
    <source>
        <dbReference type="PDB" id="1QTR"/>
    </source>
</evidence>
<evidence type="ECO:0007829" key="4">
    <source>
        <dbReference type="PDB" id="1WM1"/>
    </source>
</evidence>
<feature type="chain" id="PRO_0000080845" description="Proline iminopeptidase">
    <location>
        <begin position="1"/>
        <end position="317"/>
    </location>
</feature>
<feature type="domain" description="AB hydrolase-1" evidence="1">
    <location>
        <begin position="41"/>
        <end position="296"/>
    </location>
</feature>
<feature type="active site" description="Nucleophile">
    <location>
        <position position="113"/>
    </location>
</feature>
<feature type="active site">
    <location>
        <position position="268"/>
    </location>
</feature>
<feature type="active site" description="Proton donor">
    <location>
        <position position="296"/>
    </location>
</feature>
<feature type="strand" evidence="4">
    <location>
        <begin position="14"/>
        <end position="20"/>
    </location>
</feature>
<feature type="strand" evidence="4">
    <location>
        <begin position="22"/>
        <end position="24"/>
    </location>
</feature>
<feature type="strand" evidence="4">
    <location>
        <begin position="26"/>
        <end position="33"/>
    </location>
</feature>
<feature type="strand" evidence="4">
    <location>
        <begin position="37"/>
        <end position="43"/>
    </location>
</feature>
<feature type="turn" evidence="4">
    <location>
        <begin position="46"/>
        <end position="48"/>
    </location>
</feature>
<feature type="helix" evidence="4">
    <location>
        <begin position="53"/>
        <end position="58"/>
    </location>
</feature>
<feature type="turn" evidence="4">
    <location>
        <begin position="61"/>
        <end position="63"/>
    </location>
</feature>
<feature type="strand" evidence="4">
    <location>
        <begin position="64"/>
        <end position="69"/>
    </location>
</feature>
<feature type="strand" evidence="3">
    <location>
        <begin position="72"/>
        <end position="74"/>
    </location>
</feature>
<feature type="helix" evidence="4">
    <location>
        <begin position="88"/>
        <end position="101"/>
    </location>
</feature>
<feature type="strand" evidence="4">
    <location>
        <begin position="105"/>
        <end position="112"/>
    </location>
</feature>
<feature type="helix" evidence="4">
    <location>
        <begin position="114"/>
        <end position="125"/>
    </location>
</feature>
<feature type="helix" evidence="4">
    <location>
        <begin position="127"/>
        <end position="129"/>
    </location>
</feature>
<feature type="strand" evidence="4">
    <location>
        <begin position="130"/>
        <end position="137"/>
    </location>
</feature>
<feature type="helix" evidence="4">
    <location>
        <begin position="143"/>
        <end position="150"/>
    </location>
</feature>
<feature type="helix" evidence="4">
    <location>
        <begin position="154"/>
        <end position="156"/>
    </location>
</feature>
<feature type="helix" evidence="4">
    <location>
        <begin position="159"/>
        <end position="166"/>
    </location>
</feature>
<feature type="helix" evidence="4">
    <location>
        <begin position="173"/>
        <end position="175"/>
    </location>
</feature>
<feature type="helix" evidence="4">
    <location>
        <begin position="177"/>
        <end position="185"/>
    </location>
</feature>
<feature type="helix" evidence="4">
    <location>
        <begin position="190"/>
        <end position="205"/>
    </location>
</feature>
<feature type="strand" evidence="4">
    <location>
        <begin position="208"/>
        <end position="211"/>
    </location>
</feature>
<feature type="helix" evidence="4">
    <location>
        <begin position="214"/>
        <end position="220"/>
    </location>
</feature>
<feature type="helix" evidence="4">
    <location>
        <begin position="222"/>
        <end position="237"/>
    </location>
</feature>
<feature type="helix" evidence="4">
    <location>
        <begin position="239"/>
        <end position="241"/>
    </location>
</feature>
<feature type="helix" evidence="4">
    <location>
        <begin position="247"/>
        <end position="250"/>
    </location>
</feature>
<feature type="helix" evidence="4">
    <location>
        <begin position="252"/>
        <end position="255"/>
    </location>
</feature>
<feature type="strand" evidence="4">
    <location>
        <begin position="260"/>
        <end position="265"/>
    </location>
</feature>
<feature type="strand" evidence="4">
    <location>
        <begin position="269"/>
        <end position="271"/>
    </location>
</feature>
<feature type="helix" evidence="4">
    <location>
        <begin position="273"/>
        <end position="282"/>
    </location>
</feature>
<feature type="strand" evidence="4">
    <location>
        <begin position="286"/>
        <end position="291"/>
    </location>
</feature>
<feature type="helix" evidence="4">
    <location>
        <begin position="301"/>
        <end position="314"/>
    </location>
</feature>
<organism>
    <name type="scientific">Serratia marcescens</name>
    <dbReference type="NCBI Taxonomy" id="615"/>
    <lineage>
        <taxon>Bacteria</taxon>
        <taxon>Pseudomonadati</taxon>
        <taxon>Pseudomonadota</taxon>
        <taxon>Gammaproteobacteria</taxon>
        <taxon>Enterobacterales</taxon>
        <taxon>Yersiniaceae</taxon>
        <taxon>Serratia</taxon>
    </lineage>
</organism>
<reference key="1">
    <citation type="journal article" date="1997" name="J. Biochem.">
        <title>Prolyl aminopeptidase from Serratia marcescens: cloning of the enzyme gene and crystallization of the expressed enzyme.</title>
        <authorList>
            <person name="Kabashima T."/>
            <person name="Kitazono A."/>
            <person name="Kitano A."/>
            <person name="Ito K."/>
            <person name="Yoshimoto T."/>
        </authorList>
    </citation>
    <scope>NUCLEOTIDE SEQUENCE [GENOMIC DNA]</scope>
</reference>
<reference key="2">
    <citation type="journal article" date="2000" name="J. Biochem.">
        <title>Substrate recognition mechanism of prolyl aminopeptidase from Serratia marcescens.</title>
        <authorList>
            <person name="Ito K."/>
            <person name="Inoue T."/>
            <person name="Kabashima T."/>
            <person name="Kanada N."/>
            <person name="Huang H.S."/>
            <person name="Ma X."/>
            <person name="Azmi N."/>
            <person name="Azab E."/>
            <person name="Yoshimoto T."/>
        </authorList>
    </citation>
    <scope>MUTAGENESIS</scope>
</reference>
<reference key="3">
    <citation type="journal article" date="1999" name="J. Biochem.">
        <title>Crystal structure of prolyl aminopeptidase from Serratia marcescens.</title>
        <authorList>
            <person name="Yoshimoto T."/>
            <person name="Kabashima T."/>
            <person name="Uchikawa K."/>
            <person name="Inoue T."/>
            <person name="Tanaka N."/>
            <person name="Nakamura K.T."/>
            <person name="Tsuru M."/>
            <person name="Ito K."/>
        </authorList>
    </citation>
    <scope>X-RAY CRYSTALLOGRAPHY (2.32 ANGSTROMS)</scope>
</reference>